<organism>
    <name type="scientific">Citrifermentans bemidjiense (strain ATCC BAA-1014 / DSM 16622 / JCM 12645 / Bem)</name>
    <name type="common">Geobacter bemidjiensis</name>
    <dbReference type="NCBI Taxonomy" id="404380"/>
    <lineage>
        <taxon>Bacteria</taxon>
        <taxon>Pseudomonadati</taxon>
        <taxon>Thermodesulfobacteriota</taxon>
        <taxon>Desulfuromonadia</taxon>
        <taxon>Geobacterales</taxon>
        <taxon>Geobacteraceae</taxon>
        <taxon>Citrifermentans</taxon>
    </lineage>
</organism>
<name>MURG_CITBB</name>
<reference key="1">
    <citation type="submission" date="2008-07" db="EMBL/GenBank/DDBJ databases">
        <title>Complete sequence of Geobacter bemidjiensis BEM.</title>
        <authorList>
            <consortium name="US DOE Joint Genome Institute"/>
            <person name="Lucas S."/>
            <person name="Copeland A."/>
            <person name="Lapidus A."/>
            <person name="Glavina del Rio T."/>
            <person name="Dalin E."/>
            <person name="Tice H."/>
            <person name="Bruce D."/>
            <person name="Goodwin L."/>
            <person name="Pitluck S."/>
            <person name="Kiss H."/>
            <person name="Brettin T."/>
            <person name="Detter J.C."/>
            <person name="Han C."/>
            <person name="Kuske C.R."/>
            <person name="Schmutz J."/>
            <person name="Larimer F."/>
            <person name="Land M."/>
            <person name="Hauser L."/>
            <person name="Kyrpides N."/>
            <person name="Lykidis A."/>
            <person name="Lovley D."/>
            <person name="Richardson P."/>
        </authorList>
    </citation>
    <scope>NUCLEOTIDE SEQUENCE [LARGE SCALE GENOMIC DNA]</scope>
    <source>
        <strain>ATCC BAA-1014 / DSM 16622 / JCM 12645 / Bem</strain>
    </source>
</reference>
<comment type="function">
    <text evidence="1">Cell wall formation. Catalyzes the transfer of a GlcNAc subunit on undecaprenyl-pyrophosphoryl-MurNAc-pentapeptide (lipid intermediate I) to form undecaprenyl-pyrophosphoryl-MurNAc-(pentapeptide)GlcNAc (lipid intermediate II).</text>
</comment>
<comment type="catalytic activity">
    <reaction evidence="1">
        <text>di-trans,octa-cis-undecaprenyl diphospho-N-acetyl-alpha-D-muramoyl-L-alanyl-D-glutamyl-meso-2,6-diaminopimeloyl-D-alanyl-D-alanine + UDP-N-acetyl-alpha-D-glucosamine = di-trans,octa-cis-undecaprenyl diphospho-[N-acetyl-alpha-D-glucosaminyl-(1-&gt;4)]-N-acetyl-alpha-D-muramoyl-L-alanyl-D-glutamyl-meso-2,6-diaminopimeloyl-D-alanyl-D-alanine + UDP + H(+)</text>
        <dbReference type="Rhea" id="RHEA:31227"/>
        <dbReference type="ChEBI" id="CHEBI:15378"/>
        <dbReference type="ChEBI" id="CHEBI:57705"/>
        <dbReference type="ChEBI" id="CHEBI:58223"/>
        <dbReference type="ChEBI" id="CHEBI:61387"/>
        <dbReference type="ChEBI" id="CHEBI:61388"/>
        <dbReference type="EC" id="2.4.1.227"/>
    </reaction>
</comment>
<comment type="pathway">
    <text evidence="1">Cell wall biogenesis; peptidoglycan biosynthesis.</text>
</comment>
<comment type="subcellular location">
    <subcellularLocation>
        <location evidence="1">Cell inner membrane</location>
        <topology evidence="1">Peripheral membrane protein</topology>
        <orientation evidence="1">Cytoplasmic side</orientation>
    </subcellularLocation>
</comment>
<comment type="similarity">
    <text evidence="1">Belongs to the glycosyltransferase 28 family. MurG subfamily.</text>
</comment>
<keyword id="KW-0131">Cell cycle</keyword>
<keyword id="KW-0132">Cell division</keyword>
<keyword id="KW-0997">Cell inner membrane</keyword>
<keyword id="KW-1003">Cell membrane</keyword>
<keyword id="KW-0133">Cell shape</keyword>
<keyword id="KW-0961">Cell wall biogenesis/degradation</keyword>
<keyword id="KW-0328">Glycosyltransferase</keyword>
<keyword id="KW-0472">Membrane</keyword>
<keyword id="KW-0573">Peptidoglycan synthesis</keyword>
<keyword id="KW-1185">Reference proteome</keyword>
<keyword id="KW-0808">Transferase</keyword>
<proteinExistence type="inferred from homology"/>
<protein>
    <recommendedName>
        <fullName evidence="1">UDP-N-acetylglucosamine--N-acetylmuramyl-(pentapeptide) pyrophosphoryl-undecaprenol N-acetylglucosamine transferase</fullName>
        <ecNumber evidence="1">2.4.1.227</ecNumber>
    </recommendedName>
    <alternativeName>
        <fullName evidence="1">Undecaprenyl-PP-MurNAc-pentapeptide-UDPGlcNAc GlcNAc transferase</fullName>
    </alternativeName>
</protein>
<gene>
    <name evidence="1" type="primary">murG</name>
    <name type="ordered locus">Gbem_0491</name>
</gene>
<dbReference type="EC" id="2.4.1.227" evidence="1"/>
<dbReference type="EMBL" id="CP001124">
    <property type="protein sequence ID" value="ACH37520.1"/>
    <property type="molecule type" value="Genomic_DNA"/>
</dbReference>
<dbReference type="RefSeq" id="WP_012528927.1">
    <property type="nucleotide sequence ID" value="NC_011146.1"/>
</dbReference>
<dbReference type="SMR" id="B5EBQ1"/>
<dbReference type="STRING" id="404380.Gbem_0491"/>
<dbReference type="CAZy" id="GT28">
    <property type="family name" value="Glycosyltransferase Family 28"/>
</dbReference>
<dbReference type="KEGG" id="gbm:Gbem_0491"/>
<dbReference type="eggNOG" id="COG0707">
    <property type="taxonomic scope" value="Bacteria"/>
</dbReference>
<dbReference type="HOGENOM" id="CLU_037404_0_1_7"/>
<dbReference type="OrthoDB" id="9808936at2"/>
<dbReference type="UniPathway" id="UPA00219"/>
<dbReference type="Proteomes" id="UP000008825">
    <property type="component" value="Chromosome"/>
</dbReference>
<dbReference type="GO" id="GO:0005886">
    <property type="term" value="C:plasma membrane"/>
    <property type="evidence" value="ECO:0007669"/>
    <property type="project" value="UniProtKB-SubCell"/>
</dbReference>
<dbReference type="GO" id="GO:0051991">
    <property type="term" value="F:UDP-N-acetyl-D-glucosamine:N-acetylmuramoyl-L-alanyl-D-glutamyl-meso-2,6-diaminopimelyl-D-alanyl-D-alanine-diphosphoundecaprenol 4-beta-N-acetylglucosaminlytransferase activity"/>
    <property type="evidence" value="ECO:0007669"/>
    <property type="project" value="RHEA"/>
</dbReference>
<dbReference type="GO" id="GO:0050511">
    <property type="term" value="F:undecaprenyldiphospho-muramoylpentapeptide beta-N-acetylglucosaminyltransferase activity"/>
    <property type="evidence" value="ECO:0007669"/>
    <property type="project" value="UniProtKB-UniRule"/>
</dbReference>
<dbReference type="GO" id="GO:0005975">
    <property type="term" value="P:carbohydrate metabolic process"/>
    <property type="evidence" value="ECO:0007669"/>
    <property type="project" value="InterPro"/>
</dbReference>
<dbReference type="GO" id="GO:0051301">
    <property type="term" value="P:cell division"/>
    <property type="evidence" value="ECO:0007669"/>
    <property type="project" value="UniProtKB-KW"/>
</dbReference>
<dbReference type="GO" id="GO:0071555">
    <property type="term" value="P:cell wall organization"/>
    <property type="evidence" value="ECO:0007669"/>
    <property type="project" value="UniProtKB-KW"/>
</dbReference>
<dbReference type="GO" id="GO:0030259">
    <property type="term" value="P:lipid glycosylation"/>
    <property type="evidence" value="ECO:0007669"/>
    <property type="project" value="UniProtKB-UniRule"/>
</dbReference>
<dbReference type="GO" id="GO:0009252">
    <property type="term" value="P:peptidoglycan biosynthetic process"/>
    <property type="evidence" value="ECO:0007669"/>
    <property type="project" value="UniProtKB-UniRule"/>
</dbReference>
<dbReference type="GO" id="GO:0008360">
    <property type="term" value="P:regulation of cell shape"/>
    <property type="evidence" value="ECO:0007669"/>
    <property type="project" value="UniProtKB-KW"/>
</dbReference>
<dbReference type="CDD" id="cd03785">
    <property type="entry name" value="GT28_MurG"/>
    <property type="match status" value="1"/>
</dbReference>
<dbReference type="Gene3D" id="3.40.50.2000">
    <property type="entry name" value="Glycogen Phosphorylase B"/>
    <property type="match status" value="2"/>
</dbReference>
<dbReference type="HAMAP" id="MF_00033">
    <property type="entry name" value="MurG"/>
    <property type="match status" value="1"/>
</dbReference>
<dbReference type="InterPro" id="IPR006009">
    <property type="entry name" value="GlcNAc_MurG"/>
</dbReference>
<dbReference type="InterPro" id="IPR007235">
    <property type="entry name" value="Glyco_trans_28_C"/>
</dbReference>
<dbReference type="InterPro" id="IPR004276">
    <property type="entry name" value="GlycoTrans_28_N"/>
</dbReference>
<dbReference type="NCBIfam" id="TIGR01133">
    <property type="entry name" value="murG"/>
    <property type="match status" value="1"/>
</dbReference>
<dbReference type="PANTHER" id="PTHR21015:SF22">
    <property type="entry name" value="GLYCOSYLTRANSFERASE"/>
    <property type="match status" value="1"/>
</dbReference>
<dbReference type="PANTHER" id="PTHR21015">
    <property type="entry name" value="UDP-N-ACETYLGLUCOSAMINE--N-ACETYLMURAMYL-(PENTAPEPTIDE) PYROPHOSPHORYL-UNDECAPRENOL N-ACETYLGLUCOSAMINE TRANSFERASE 1"/>
    <property type="match status" value="1"/>
</dbReference>
<dbReference type="Pfam" id="PF04101">
    <property type="entry name" value="Glyco_tran_28_C"/>
    <property type="match status" value="1"/>
</dbReference>
<dbReference type="Pfam" id="PF03033">
    <property type="entry name" value="Glyco_transf_28"/>
    <property type="match status" value="1"/>
</dbReference>
<dbReference type="SUPFAM" id="SSF53756">
    <property type="entry name" value="UDP-Glycosyltransferase/glycogen phosphorylase"/>
    <property type="match status" value="1"/>
</dbReference>
<evidence type="ECO:0000255" key="1">
    <source>
        <dbReference type="HAMAP-Rule" id="MF_00033"/>
    </source>
</evidence>
<accession>B5EBQ1</accession>
<feature type="chain" id="PRO_1000090436" description="UDP-N-acetylglucosamine--N-acetylmuramyl-(pentapeptide) pyrophosphoryl-undecaprenol N-acetylglucosamine transferase">
    <location>
        <begin position="1"/>
        <end position="358"/>
    </location>
</feature>
<feature type="binding site" evidence="1">
    <location>
        <begin position="10"/>
        <end position="12"/>
    </location>
    <ligand>
        <name>UDP-N-acetyl-alpha-D-glucosamine</name>
        <dbReference type="ChEBI" id="CHEBI:57705"/>
    </ligand>
</feature>
<feature type="binding site" evidence="1">
    <location>
        <position position="124"/>
    </location>
    <ligand>
        <name>UDP-N-acetyl-alpha-D-glucosamine</name>
        <dbReference type="ChEBI" id="CHEBI:57705"/>
    </ligand>
</feature>
<feature type="binding site" evidence="1">
    <location>
        <position position="165"/>
    </location>
    <ligand>
        <name>UDP-N-acetyl-alpha-D-glucosamine</name>
        <dbReference type="ChEBI" id="CHEBI:57705"/>
    </ligand>
</feature>
<feature type="binding site" evidence="1">
    <location>
        <position position="191"/>
    </location>
    <ligand>
        <name>UDP-N-acetyl-alpha-D-glucosamine</name>
        <dbReference type="ChEBI" id="CHEBI:57705"/>
    </ligand>
</feature>
<feature type="binding site" evidence="1">
    <location>
        <position position="246"/>
    </location>
    <ligand>
        <name>UDP-N-acetyl-alpha-D-glucosamine</name>
        <dbReference type="ChEBI" id="CHEBI:57705"/>
    </ligand>
</feature>
<feature type="binding site" evidence="1">
    <location>
        <position position="291"/>
    </location>
    <ligand>
        <name>UDP-N-acetyl-alpha-D-glucosamine</name>
        <dbReference type="ChEBI" id="CHEBI:57705"/>
    </ligand>
</feature>
<sequence length="358" mass="38533">MRLIIAGGGTGGHLFPGIAVADEFLARSPENEVLFVGTERGIEARLLPKLGYKLALISASGMKGMGTIKKIMSAGRLLYGYSQSRKILKEFRPDLVLGVGGYASAPIVLAARGMGIRRFIHEQNAFPGLTNKVLGRFVDGVFISMPEAESFFPKEMTQMTGNPIRKEILWGFQERVRSIGDTFSILVFGGSAGAQRVNSALLEALPHLEGVKGKLRITHQTGEKDAARVREGYQAQGFQAQVLSFIDDMSAAYGAADLVVCRAGATTIAEVTACGKGCIFIPFPYAADDHQRKNAESLVHKNAGVMILEEDLTGERLAAKILELMEHPAELAEIEKNARALAQLDAAQAIVSAMVSKN</sequence>